<feature type="chain" id="PRO_1000115761" description="1-deoxy-D-xylulose-5-phosphate synthase">
    <location>
        <begin position="1"/>
        <end position="638"/>
    </location>
</feature>
<feature type="binding site" evidence="1">
    <location>
        <position position="79"/>
    </location>
    <ligand>
        <name>thiamine diphosphate</name>
        <dbReference type="ChEBI" id="CHEBI:58937"/>
    </ligand>
</feature>
<feature type="binding site" evidence="1">
    <location>
        <begin position="120"/>
        <end position="122"/>
    </location>
    <ligand>
        <name>thiamine diphosphate</name>
        <dbReference type="ChEBI" id="CHEBI:58937"/>
    </ligand>
</feature>
<feature type="binding site" evidence="1">
    <location>
        <position position="151"/>
    </location>
    <ligand>
        <name>Mg(2+)</name>
        <dbReference type="ChEBI" id="CHEBI:18420"/>
    </ligand>
</feature>
<feature type="binding site" evidence="1">
    <location>
        <begin position="152"/>
        <end position="153"/>
    </location>
    <ligand>
        <name>thiamine diphosphate</name>
        <dbReference type="ChEBI" id="CHEBI:58937"/>
    </ligand>
</feature>
<feature type="binding site" evidence="1">
    <location>
        <position position="180"/>
    </location>
    <ligand>
        <name>Mg(2+)</name>
        <dbReference type="ChEBI" id="CHEBI:18420"/>
    </ligand>
</feature>
<feature type="binding site" evidence="1">
    <location>
        <position position="180"/>
    </location>
    <ligand>
        <name>thiamine diphosphate</name>
        <dbReference type="ChEBI" id="CHEBI:58937"/>
    </ligand>
</feature>
<feature type="binding site" evidence="1">
    <location>
        <position position="289"/>
    </location>
    <ligand>
        <name>thiamine diphosphate</name>
        <dbReference type="ChEBI" id="CHEBI:58937"/>
    </ligand>
</feature>
<feature type="binding site" evidence="1">
    <location>
        <position position="371"/>
    </location>
    <ligand>
        <name>thiamine diphosphate</name>
        <dbReference type="ChEBI" id="CHEBI:58937"/>
    </ligand>
</feature>
<comment type="function">
    <text evidence="1">Catalyzes the acyloin condensation reaction between C atoms 2 and 3 of pyruvate and glyceraldehyde 3-phosphate to yield 1-deoxy-D-xylulose-5-phosphate (DXP).</text>
</comment>
<comment type="catalytic activity">
    <reaction evidence="1">
        <text>D-glyceraldehyde 3-phosphate + pyruvate + H(+) = 1-deoxy-D-xylulose 5-phosphate + CO2</text>
        <dbReference type="Rhea" id="RHEA:12605"/>
        <dbReference type="ChEBI" id="CHEBI:15361"/>
        <dbReference type="ChEBI" id="CHEBI:15378"/>
        <dbReference type="ChEBI" id="CHEBI:16526"/>
        <dbReference type="ChEBI" id="CHEBI:57792"/>
        <dbReference type="ChEBI" id="CHEBI:59776"/>
        <dbReference type="EC" id="2.2.1.7"/>
    </reaction>
</comment>
<comment type="cofactor">
    <cofactor evidence="1">
        <name>Mg(2+)</name>
        <dbReference type="ChEBI" id="CHEBI:18420"/>
    </cofactor>
    <text evidence="1">Binds 1 Mg(2+) ion per subunit.</text>
</comment>
<comment type="cofactor">
    <cofactor evidence="1">
        <name>thiamine diphosphate</name>
        <dbReference type="ChEBI" id="CHEBI:58937"/>
    </cofactor>
    <text evidence="1">Binds 1 thiamine pyrophosphate per subunit.</text>
</comment>
<comment type="pathway">
    <text evidence="1">Metabolic intermediate biosynthesis; 1-deoxy-D-xylulose 5-phosphate biosynthesis; 1-deoxy-D-xylulose 5-phosphate from D-glyceraldehyde 3-phosphate and pyruvate: step 1/1.</text>
</comment>
<comment type="subunit">
    <text evidence="1">Homodimer.</text>
</comment>
<comment type="similarity">
    <text evidence="1">Belongs to the transketolase family. DXPS subfamily.</text>
</comment>
<accession>B5ZS68</accession>
<proteinExistence type="inferred from homology"/>
<protein>
    <recommendedName>
        <fullName evidence="1">1-deoxy-D-xylulose-5-phosphate synthase</fullName>
        <ecNumber evidence="1">2.2.1.7</ecNumber>
    </recommendedName>
    <alternativeName>
        <fullName evidence="1">1-deoxyxylulose-5-phosphate synthase</fullName>
        <shortName evidence="1">DXP synthase</shortName>
        <shortName evidence="1">DXPS</shortName>
    </alternativeName>
</protein>
<keyword id="KW-0414">Isoprene biosynthesis</keyword>
<keyword id="KW-0460">Magnesium</keyword>
<keyword id="KW-0479">Metal-binding</keyword>
<keyword id="KW-1185">Reference proteome</keyword>
<keyword id="KW-0784">Thiamine biosynthesis</keyword>
<keyword id="KW-0786">Thiamine pyrophosphate</keyword>
<keyword id="KW-0808">Transferase</keyword>
<gene>
    <name evidence="1" type="primary">dxs</name>
    <name type="ordered locus">Rleg2_0564</name>
</gene>
<dbReference type="EC" id="2.2.1.7" evidence="1"/>
<dbReference type="EMBL" id="CP001191">
    <property type="protein sequence ID" value="ACI53861.1"/>
    <property type="molecule type" value="Genomic_DNA"/>
</dbReference>
<dbReference type="RefSeq" id="WP_012556786.1">
    <property type="nucleotide sequence ID" value="NC_011369.1"/>
</dbReference>
<dbReference type="SMR" id="B5ZS68"/>
<dbReference type="STRING" id="395492.Rleg2_0564"/>
<dbReference type="KEGG" id="rlt:Rleg2_0564"/>
<dbReference type="eggNOG" id="COG1154">
    <property type="taxonomic scope" value="Bacteria"/>
</dbReference>
<dbReference type="HOGENOM" id="CLU_009227_1_4_5"/>
<dbReference type="UniPathway" id="UPA00064">
    <property type="reaction ID" value="UER00091"/>
</dbReference>
<dbReference type="Proteomes" id="UP000008330">
    <property type="component" value="Chromosome"/>
</dbReference>
<dbReference type="GO" id="GO:0008661">
    <property type="term" value="F:1-deoxy-D-xylulose-5-phosphate synthase activity"/>
    <property type="evidence" value="ECO:0007669"/>
    <property type="project" value="UniProtKB-UniRule"/>
</dbReference>
<dbReference type="GO" id="GO:0000287">
    <property type="term" value="F:magnesium ion binding"/>
    <property type="evidence" value="ECO:0007669"/>
    <property type="project" value="UniProtKB-UniRule"/>
</dbReference>
<dbReference type="GO" id="GO:0030976">
    <property type="term" value="F:thiamine pyrophosphate binding"/>
    <property type="evidence" value="ECO:0007669"/>
    <property type="project" value="UniProtKB-UniRule"/>
</dbReference>
<dbReference type="GO" id="GO:0052865">
    <property type="term" value="P:1-deoxy-D-xylulose 5-phosphate biosynthetic process"/>
    <property type="evidence" value="ECO:0007669"/>
    <property type="project" value="UniProtKB-UniPathway"/>
</dbReference>
<dbReference type="GO" id="GO:0019682">
    <property type="term" value="P:glyceraldehyde-3-phosphate metabolic process"/>
    <property type="evidence" value="ECO:0007669"/>
    <property type="project" value="UniProtKB-ARBA"/>
</dbReference>
<dbReference type="GO" id="GO:0016114">
    <property type="term" value="P:terpenoid biosynthetic process"/>
    <property type="evidence" value="ECO:0007669"/>
    <property type="project" value="UniProtKB-UniRule"/>
</dbReference>
<dbReference type="GO" id="GO:0009228">
    <property type="term" value="P:thiamine biosynthetic process"/>
    <property type="evidence" value="ECO:0007669"/>
    <property type="project" value="UniProtKB-UniRule"/>
</dbReference>
<dbReference type="CDD" id="cd02007">
    <property type="entry name" value="TPP_DXS"/>
    <property type="match status" value="1"/>
</dbReference>
<dbReference type="CDD" id="cd07033">
    <property type="entry name" value="TPP_PYR_DXS_TK_like"/>
    <property type="match status" value="1"/>
</dbReference>
<dbReference type="FunFam" id="3.40.50.920:FF:000002">
    <property type="entry name" value="1-deoxy-D-xylulose-5-phosphate synthase"/>
    <property type="match status" value="1"/>
</dbReference>
<dbReference type="FunFam" id="3.40.50.970:FF:000005">
    <property type="entry name" value="1-deoxy-D-xylulose-5-phosphate synthase"/>
    <property type="match status" value="1"/>
</dbReference>
<dbReference type="Gene3D" id="3.40.50.920">
    <property type="match status" value="1"/>
</dbReference>
<dbReference type="Gene3D" id="3.40.50.970">
    <property type="match status" value="2"/>
</dbReference>
<dbReference type="HAMAP" id="MF_00315">
    <property type="entry name" value="DXP_synth"/>
    <property type="match status" value="1"/>
</dbReference>
<dbReference type="InterPro" id="IPR005477">
    <property type="entry name" value="Dxylulose-5-P_synthase"/>
</dbReference>
<dbReference type="InterPro" id="IPR029061">
    <property type="entry name" value="THDP-binding"/>
</dbReference>
<dbReference type="InterPro" id="IPR009014">
    <property type="entry name" value="Transketo_C/PFOR_II"/>
</dbReference>
<dbReference type="InterPro" id="IPR005475">
    <property type="entry name" value="Transketolase-like_Pyr-bd"/>
</dbReference>
<dbReference type="InterPro" id="IPR033248">
    <property type="entry name" value="Transketolase_C"/>
</dbReference>
<dbReference type="InterPro" id="IPR049557">
    <property type="entry name" value="Transketolase_CS"/>
</dbReference>
<dbReference type="NCBIfam" id="TIGR00204">
    <property type="entry name" value="dxs"/>
    <property type="match status" value="1"/>
</dbReference>
<dbReference type="NCBIfam" id="NF003933">
    <property type="entry name" value="PRK05444.2-2"/>
    <property type="match status" value="1"/>
</dbReference>
<dbReference type="PANTHER" id="PTHR43322">
    <property type="entry name" value="1-D-DEOXYXYLULOSE 5-PHOSPHATE SYNTHASE-RELATED"/>
    <property type="match status" value="1"/>
</dbReference>
<dbReference type="PANTHER" id="PTHR43322:SF5">
    <property type="entry name" value="1-DEOXY-D-XYLULOSE-5-PHOSPHATE SYNTHASE, CHLOROPLASTIC"/>
    <property type="match status" value="1"/>
</dbReference>
<dbReference type="Pfam" id="PF13292">
    <property type="entry name" value="DXP_synthase_N"/>
    <property type="match status" value="1"/>
</dbReference>
<dbReference type="Pfam" id="PF02779">
    <property type="entry name" value="Transket_pyr"/>
    <property type="match status" value="1"/>
</dbReference>
<dbReference type="Pfam" id="PF02780">
    <property type="entry name" value="Transketolase_C"/>
    <property type="match status" value="1"/>
</dbReference>
<dbReference type="SMART" id="SM00861">
    <property type="entry name" value="Transket_pyr"/>
    <property type="match status" value="1"/>
</dbReference>
<dbReference type="SUPFAM" id="SSF52518">
    <property type="entry name" value="Thiamin diphosphate-binding fold (THDP-binding)"/>
    <property type="match status" value="2"/>
</dbReference>
<dbReference type="SUPFAM" id="SSF52922">
    <property type="entry name" value="TK C-terminal domain-like"/>
    <property type="match status" value="1"/>
</dbReference>
<dbReference type="PROSITE" id="PS00801">
    <property type="entry name" value="TRANSKETOLASE_1"/>
    <property type="match status" value="1"/>
</dbReference>
<organism>
    <name type="scientific">Rhizobium leguminosarum bv. trifolii (strain WSM2304)</name>
    <dbReference type="NCBI Taxonomy" id="395492"/>
    <lineage>
        <taxon>Bacteria</taxon>
        <taxon>Pseudomonadati</taxon>
        <taxon>Pseudomonadota</taxon>
        <taxon>Alphaproteobacteria</taxon>
        <taxon>Hyphomicrobiales</taxon>
        <taxon>Rhizobiaceae</taxon>
        <taxon>Rhizobium/Agrobacterium group</taxon>
        <taxon>Rhizobium</taxon>
    </lineage>
</organism>
<sequence length="638" mass="68416">MTQLPKTPLLDQVTYPADLRKLEDRDLPQLAREVRDEMIDAVSRTGGHLGAGLGVVELTIAIHSVFDTPDDRLIFDVGHQCYPHKILTGRRDRIRTLRQEDGLSGFTRRAESEYDPFGAAHSSTSISAGLGMAIAADLDKNDRRVIAVIGDGAMSAGMAYEALNNAGALDARLIVILNDNDMSIAPPTGAMSAYLARLASGRTYMGFRDFGKKLTAYLGKNIDRAITRAVEHARGYVTGGTMFEEMGFYHIGPIDGHSFDHLLPVLRNVRDNARGPVLIHVVTQKGKGYPPAEAAADKYHGVNKFDVITGAQARVKPNAPSYTSVFAEALVQEATLDDKIVGITAAMPNGTGLDKLAEAFPSRCFDVGIAEQHAVTFAAGLAAEGYKPFAALYSTFLQRAYDQVVHDVAIQGLPVRFPIDRAGFVGADGPTHAGSFDTAFLTTLPGFVVMAAADEAELKHMVRTAVAYDAGPISFRYPRGEGVGVDMPVRGEILRIGKGRIVKEGTKVALLSFGTRLADCLLAAEDLDAAGLSTTVADARFAKPLDHDLIRQFARHHEMVITVEEGSVGGFGSQVMQYLSSEGLLDNGLKIRSLVMPDIWMEQAKPEAMNAHAGLDRAGIVSTVFRALGRGVAVGVAG</sequence>
<evidence type="ECO:0000255" key="1">
    <source>
        <dbReference type="HAMAP-Rule" id="MF_00315"/>
    </source>
</evidence>
<name>DXS_RHILW</name>
<reference key="1">
    <citation type="journal article" date="2010" name="Stand. Genomic Sci.">
        <title>Complete genome sequence of Rhizobium leguminosarum bv trifolii strain WSM2304, an effective microsymbiont of the South American clover Trifolium polymorphum.</title>
        <authorList>
            <person name="Reeve W."/>
            <person name="O'Hara G."/>
            <person name="Chain P."/>
            <person name="Ardley J."/>
            <person name="Brau L."/>
            <person name="Nandesena K."/>
            <person name="Tiwari R."/>
            <person name="Malfatti S."/>
            <person name="Kiss H."/>
            <person name="Lapidus A."/>
            <person name="Copeland A."/>
            <person name="Nolan M."/>
            <person name="Land M."/>
            <person name="Ivanova N."/>
            <person name="Mavromatis K."/>
            <person name="Markowitz V."/>
            <person name="Kyrpides N."/>
            <person name="Melino V."/>
            <person name="Denton M."/>
            <person name="Yates R."/>
            <person name="Howieson J."/>
        </authorList>
    </citation>
    <scope>NUCLEOTIDE SEQUENCE [LARGE SCALE GENOMIC DNA]</scope>
    <source>
        <strain>WSM2304</strain>
    </source>
</reference>